<sequence>MVKSHIGSWILVLFVAMWSDVGLCKKRPKPGGGWNTGGSRYPGQGSPGGNRYPPQGGGGWGQPHGGGWGQPHGGGWGQPHGGGWGQPHGGGWGQPHGGGGWGQGGTHGQWNKPSKPKTNMKHVAGAAAAGAVVGGLGGYMLGSAMSRPLIHFGSDYEDRYYRENMHRYPNQVYYRPVDQYSNQNNFVHDCVNITVKEHTVTTTTKGENFTETDIKMMERVVEQMCITQYQRESQAYYQRGASVILFSSPPVILLISFLIFLIVG</sequence>
<name>PRIO_BOVIN</name>
<proteinExistence type="evidence at protein level"/>
<comment type="function">
    <text evidence="2 3">Its primary physiological function is unclear. May play a role in neuronal development and synaptic plasticity. May be required for neuronal myelin sheath maintenance. May promote myelin homeostasis through acting as an agonist for ADGRG6 receptor. May play a role in iron uptake and iron homeostasis. Soluble oligomers are toxic to cultured neuroblastoma cells and induce apoptosis (in vitro) (By similarity). Association with GPC1 (via its heparan sulfate chains) targets PRNP to lipid rafts. Also provides Cu(2+) or Zn(2+) for the ascorbate-mediated GPC1 deaminase degradation of its heparan sulfate side chains (By similarity).</text>
</comment>
<comment type="subunit">
    <text evidence="2 3">Monomer and homodimer. Has a tendency to aggregate into amyloid fibrils containing a cross-beta spine, formed by a steric zipper of superposed beta-strands. Soluble oligomers may represent an intermediate stage on the path to fibril formation. Copper binding may promote oligomerization. Interacts with GRB2, APP, ERI3/PRNPIP and SYN1 (By similarity). Mislocalized cytosolically exposed PrP interacts with MGRN1; this interaction alters MGRN1 subcellular location and causes lysosomal enlargement (By similarity). Interacts with APP. Interacts with KIAA1191 (By similarity). Interacts with ADGRG6 (By similarity).</text>
</comment>
<comment type="interaction">
    <interactant intactId="EBI-7430632">
        <id>P10279</id>
    </interactant>
    <interactant intactId="EBI-7430632">
        <id>P10279</id>
        <label>PRNP</label>
    </interactant>
    <organismsDiffer>false</organismsDiffer>
    <experiments>3</experiments>
</comment>
<comment type="interaction">
    <interactant intactId="EBI-7430632">
        <id>P10279</id>
    </interactant>
    <interactant intactId="EBI-977302">
        <id>P04156</id>
        <label>PRNP</label>
    </interactant>
    <organismsDiffer>true</organismsDiffer>
    <experiments>5</experiments>
</comment>
<comment type="subcellular location">
    <subcellularLocation>
        <location evidence="2">Cell membrane</location>
        <topology evidence="2">Lipid-anchor</topology>
        <topology evidence="2">GPI-anchor</topology>
    </subcellularLocation>
    <subcellularLocation>
        <location evidence="3">Golgi apparatus</location>
    </subcellularLocation>
    <text evidence="2">Targeted to lipid rafts via association with the heparan sulfate chains of GPC1. Colocates, in the presence of Cu(2+), to vesicles in para- and perinuclear regions, where both proteins undergo internalization. Heparin displaces PRNP from lipid rafts and promotes endocytosis.</text>
</comment>
<comment type="domain">
    <text evidence="2">The normal, monomeric form has a mainly alpha-helical structure. The disease-associated, protease-resistant form forms amyloid fibrils containing a cross-beta spine, formed by a steric zipper of superposed beta-strands. Disease mutations may favor intermolecular contacts via short beta strands, and may thereby trigger oligomerization.</text>
</comment>
<comment type="domain">
    <text evidence="2">Contains an N-terminal region composed of octamer repeats. At low copper concentrations, the sidechains of His residues from three or four repeats contribute to the binding of a single copper ion. Alternatively, a copper ion can be bound by interaction with the sidechain and backbone amide nitrogen of a single His residue. The observed copper binding stoichiometry suggests that two repeat regions cooperate to stabilize the binding of a single copper ion. At higher copper concentrations, each octamer can bind one copper ion by interactions with the His sidechain and Gly backbone atoms. A mixture of binding types may occur, especially in the case of octamer repeat expansion. Copper binding may stabilize the conformation of this region and may promote oligomerization.</text>
</comment>
<comment type="disease">
    <text evidence="12">Variations in PRNP are responsible of transmissible bovine spongiform encephalopathies (BSE), a class of neurodegenerative diseases that affect various mammals. These diseases are caused by abnormally folded prion proteins. BSE can be subdivided into at least three groups: classical, H-type and L-type, with the latter 2 collectively referred to as atypical BSE. Susceptibility or resistance to a BSE disease can be influenced by at least 3 factors related to the host prion protein: protein expression levels, number of octapeptide repeats, and specific polymorphisms. In cattle, as in humans, BSEs can occur as infectious, spontaneous and genetic diseases.</text>
</comment>
<comment type="miscellaneous">
    <text>This protein is produced by a bicistronic gene which also produces the major prion protein/PRNP from an overlapping reading frame.</text>
</comment>
<comment type="miscellaneous">
    <text evidence="1">The alternative prion protein/AltPrP (AC F7VJQ2) and PRNP have no apparent direct functional relation since a mutation that removes the start codon of the AltPrP has no apparent effect on the biology of PRNP (By similarity). In mouse and hamster, the alternative initiation AUG codon is absent and is replaced by a GUG codon.</text>
</comment>
<comment type="similarity">
    <text evidence="12">Belongs to the prion family.</text>
</comment>
<protein>
    <recommendedName>
        <fullName>Major prion protein</fullName>
        <shortName>PrP</shortName>
    </recommendedName>
    <alternativeName>
        <fullName>Major scrapie-associated fibril protein 1</fullName>
    </alternativeName>
    <cdAntigenName>CD230</cdAntigenName>
</protein>
<accession>P10279</accession>
<accession>A1YVV9</accession>
<accession>Q01880</accession>
<accession>Q0VD57</accession>
<accession>Q5UJJ5</accession>
<accession>Q5UJM6</accession>
<accession>Q5UK69</accession>
<accession>Q5UK71</accession>
<accession>Q6UL03</accession>
<accession>Q6UL04</accession>
<accession>Q6UL05</accession>
<accession>Q6UL06</accession>
<accession>Q7YRN3</accession>
<accession>Q8MJI7</accession>
<keyword id="KW-0002">3D-structure</keyword>
<keyword id="KW-0034">Amyloid</keyword>
<keyword id="KW-1003">Cell membrane</keyword>
<keyword id="KW-0186">Copper</keyword>
<keyword id="KW-0903">Direct protein sequencing</keyword>
<keyword id="KW-1015">Disulfide bond</keyword>
<keyword id="KW-0325">Glycoprotein</keyword>
<keyword id="KW-0333">Golgi apparatus</keyword>
<keyword id="KW-0336">GPI-anchor</keyword>
<keyword id="KW-0449">Lipoprotein</keyword>
<keyword id="KW-0472">Membrane</keyword>
<keyword id="KW-0479">Metal-binding</keyword>
<keyword id="KW-0640">Prion</keyword>
<keyword id="KW-1185">Reference proteome</keyword>
<keyword id="KW-0677">Repeat</keyword>
<keyword id="KW-0732">Signal</keyword>
<keyword id="KW-0862">Zinc</keyword>
<feature type="signal peptide" evidence="9">
    <location>
        <begin position="1"/>
        <end position="24"/>
    </location>
</feature>
<feature type="chain" id="PRO_0000025627" description="Major prion protein">
    <location>
        <begin position="25"/>
        <end position="241"/>
    </location>
</feature>
<feature type="propeptide" id="PRO_0000025628" description="Removed in mature form" evidence="4">
    <location>
        <begin position="242"/>
        <end position="264"/>
    </location>
</feature>
<feature type="repeat" description="1">
    <location>
        <begin position="54"/>
        <end position="62"/>
    </location>
</feature>
<feature type="repeat" description="2">
    <location>
        <begin position="63"/>
        <end position="70"/>
    </location>
</feature>
<feature type="repeat" description="3">
    <location>
        <begin position="71"/>
        <end position="78"/>
    </location>
</feature>
<feature type="repeat" description="4">
    <location>
        <begin position="79"/>
        <end position="86"/>
    </location>
</feature>
<feature type="repeat" description="5">
    <location>
        <begin position="87"/>
        <end position="94"/>
    </location>
</feature>
<feature type="repeat" description="6">
    <location>
        <begin position="95"/>
        <end position="103"/>
    </location>
</feature>
<feature type="region of interest" description="Interaction with GRB2, ERI3 and SYN1" evidence="3">
    <location>
        <begin position="25"/>
        <end position="241"/>
    </location>
</feature>
<feature type="region of interest" description="Interaction with ADGRG6" evidence="3">
    <location>
        <begin position="25"/>
        <end position="41"/>
    </location>
</feature>
<feature type="region of interest" description="Disordered" evidence="5">
    <location>
        <begin position="28"/>
        <end position="119"/>
    </location>
</feature>
<feature type="region of interest" description="6 X 8 AA tandem repeats of P-H-G-G-G-W-G-Q">
    <location>
        <begin position="54"/>
        <end position="103"/>
    </location>
</feature>
<feature type="compositionally biased region" description="Gly residues" evidence="5">
    <location>
        <begin position="55"/>
        <end position="107"/>
    </location>
</feature>
<feature type="binding site" evidence="2">
    <location>
        <position position="72"/>
    </location>
    <ligand>
        <name>Cu(2+)</name>
        <dbReference type="ChEBI" id="CHEBI:29036"/>
        <label>1</label>
    </ligand>
</feature>
<feature type="binding site" evidence="2">
    <location>
        <position position="73"/>
    </location>
    <ligand>
        <name>Cu(2+)</name>
        <dbReference type="ChEBI" id="CHEBI:29036"/>
        <label>1</label>
    </ligand>
</feature>
<feature type="binding site" evidence="2">
    <location>
        <position position="74"/>
    </location>
    <ligand>
        <name>Cu(2+)</name>
        <dbReference type="ChEBI" id="CHEBI:29036"/>
        <label>1</label>
    </ligand>
</feature>
<feature type="binding site" evidence="2">
    <location>
        <position position="80"/>
    </location>
    <ligand>
        <name>Cu(2+)</name>
        <dbReference type="ChEBI" id="CHEBI:29036"/>
        <label>2</label>
    </ligand>
</feature>
<feature type="binding site" evidence="2">
    <location>
        <position position="81"/>
    </location>
    <ligand>
        <name>Cu(2+)</name>
        <dbReference type="ChEBI" id="CHEBI:29036"/>
        <label>2</label>
    </ligand>
</feature>
<feature type="binding site" evidence="2">
    <location>
        <position position="82"/>
    </location>
    <ligand>
        <name>Cu(2+)</name>
        <dbReference type="ChEBI" id="CHEBI:29036"/>
        <label>2</label>
    </ligand>
</feature>
<feature type="binding site" evidence="2">
    <location>
        <position position="88"/>
    </location>
    <ligand>
        <name>Cu(2+)</name>
        <dbReference type="ChEBI" id="CHEBI:29036"/>
        <label>3</label>
    </ligand>
</feature>
<feature type="binding site" evidence="2">
    <location>
        <position position="89"/>
    </location>
    <ligand>
        <name>Cu(2+)</name>
        <dbReference type="ChEBI" id="CHEBI:29036"/>
        <label>3</label>
    </ligand>
</feature>
<feature type="binding site" evidence="2">
    <location>
        <position position="90"/>
    </location>
    <ligand>
        <name>Cu(2+)</name>
        <dbReference type="ChEBI" id="CHEBI:29036"/>
        <label>3</label>
    </ligand>
</feature>
<feature type="binding site" evidence="2">
    <location>
        <position position="96"/>
    </location>
    <ligand>
        <name>Cu(2+)</name>
        <dbReference type="ChEBI" id="CHEBI:29036"/>
        <label>4</label>
    </ligand>
</feature>
<feature type="binding site" evidence="2">
    <location>
        <position position="98"/>
    </location>
    <ligand>
        <name>Cu(2+)</name>
        <dbReference type="ChEBI" id="CHEBI:29036"/>
        <label>4</label>
    </ligand>
</feature>
<feature type="binding site" evidence="2">
    <location>
        <position position="99"/>
    </location>
    <ligand>
        <name>Cu(2+)</name>
        <dbReference type="ChEBI" id="CHEBI:29036"/>
        <label>4</label>
    </ligand>
</feature>
<feature type="lipid moiety-binding region" description="GPI-anchor amidated alanine" evidence="4">
    <location>
        <position position="241"/>
    </location>
</feature>
<feature type="glycosylation site" description="N-linked (GlcNAc...) asparagine" evidence="12">
    <location>
        <position position="192"/>
    </location>
</feature>
<feature type="glycosylation site" description="N-linked (GlcNAc...) asparagine" evidence="12">
    <location>
        <position position="208"/>
    </location>
</feature>
<feature type="disulfide bond">
    <location>
        <begin position="190"/>
        <end position="225"/>
    </location>
</feature>
<feature type="sequence variant" evidence="10">
    <original>W</original>
    <variation>R</variation>
    <location>
        <position position="60"/>
    </location>
</feature>
<feature type="sequence variant" description="In allele 2.">
    <location>
        <begin position="71"/>
        <end position="78"/>
    </location>
</feature>
<feature type="sequence variant" evidence="7">
    <location>
        <begin position="84"/>
        <end position="99"/>
    </location>
</feature>
<feature type="sequence variant" evidence="6 7">
    <location>
        <begin position="92"/>
        <end position="99"/>
    </location>
</feature>
<feature type="sequence variant" evidence="10">
    <original>Q</original>
    <variation>R</variation>
    <location>
        <position position="94"/>
    </location>
</feature>
<feature type="sequence variant" evidence="11">
    <original>G</original>
    <variation>GGWGQPHGG</variation>
    <location>
        <position position="98"/>
    </location>
</feature>
<feature type="sequence variant" evidence="6 10">
    <original>S</original>
    <variation>N</variation>
    <location>
        <position position="154"/>
    </location>
</feature>
<feature type="sequence variant" evidence="8">
    <original>E</original>
    <variation>K</variation>
    <location>
        <position position="211"/>
    </location>
</feature>
<feature type="sequence variant" evidence="10">
    <original>Q</original>
    <variation>R</variation>
    <location>
        <position position="234"/>
    </location>
</feature>
<feature type="sequence conflict" description="In Ref. 2; BAA01469." evidence="12" ref="2">
    <original>THG</original>
    <variation>SHS</variation>
    <location>
        <begin position="106"/>
        <end position="108"/>
    </location>
</feature>
<feature type="sequence conflict" description="In Ref. 2; BAA01467 and 4; BAA19253." evidence="12" ref="2 4">
    <original>E</original>
    <variation>K</variation>
    <location>
        <position position="218"/>
    </location>
</feature>
<feature type="turn" evidence="14">
    <location>
        <begin position="3"/>
        <end position="8"/>
    </location>
</feature>
<feature type="helix" evidence="14">
    <location>
        <begin position="9"/>
        <end position="21"/>
    </location>
</feature>
<feature type="strand" evidence="14">
    <location>
        <begin position="24"/>
        <end position="26"/>
    </location>
</feature>
<feature type="strand" evidence="15">
    <location>
        <begin position="109"/>
        <end position="111"/>
    </location>
</feature>
<feature type="helix" evidence="13">
    <location>
        <begin position="136"/>
        <end position="138"/>
    </location>
</feature>
<feature type="strand" evidence="13">
    <location>
        <begin position="139"/>
        <end position="141"/>
    </location>
</feature>
<feature type="helix" evidence="16">
    <location>
        <begin position="155"/>
        <end position="164"/>
    </location>
</feature>
<feature type="helix" evidence="16">
    <location>
        <begin position="165"/>
        <end position="167"/>
    </location>
</feature>
<feature type="helix" evidence="16">
    <location>
        <begin position="177"/>
        <end position="179"/>
    </location>
</feature>
<feature type="strand" evidence="16">
    <location>
        <begin position="180"/>
        <end position="182"/>
    </location>
</feature>
<feature type="helix" evidence="16">
    <location>
        <begin position="183"/>
        <end position="204"/>
    </location>
</feature>
<feature type="helix" evidence="16">
    <location>
        <begin position="211"/>
        <end position="233"/>
    </location>
</feature>
<organism>
    <name type="scientific">Bos taurus</name>
    <name type="common">Bovine</name>
    <dbReference type="NCBI Taxonomy" id="9913"/>
    <lineage>
        <taxon>Eukaryota</taxon>
        <taxon>Metazoa</taxon>
        <taxon>Chordata</taxon>
        <taxon>Craniata</taxon>
        <taxon>Vertebrata</taxon>
        <taxon>Euteleostomi</taxon>
        <taxon>Mammalia</taxon>
        <taxon>Eutheria</taxon>
        <taxon>Laurasiatheria</taxon>
        <taxon>Artiodactyla</taxon>
        <taxon>Ruminantia</taxon>
        <taxon>Pecora</taxon>
        <taxon>Bovidae</taxon>
        <taxon>Bovinae</taxon>
        <taxon>Bos</taxon>
    </lineage>
</organism>
<evidence type="ECO:0000250" key="1"/>
<evidence type="ECO:0000250" key="2">
    <source>
        <dbReference type="UniProtKB" id="P04156"/>
    </source>
</evidence>
<evidence type="ECO:0000250" key="3">
    <source>
        <dbReference type="UniProtKB" id="P04925"/>
    </source>
</evidence>
<evidence type="ECO:0000255" key="4"/>
<evidence type="ECO:0000256" key="5">
    <source>
        <dbReference type="SAM" id="MobiDB-lite"/>
    </source>
</evidence>
<evidence type="ECO:0000269" key="6">
    <source>
    </source>
</evidence>
<evidence type="ECO:0000269" key="7">
    <source>
    </source>
</evidence>
<evidence type="ECO:0000269" key="8">
    <source>
    </source>
</evidence>
<evidence type="ECO:0000269" key="9">
    <source>
    </source>
</evidence>
<evidence type="ECO:0000269" key="10">
    <source ref="10"/>
</evidence>
<evidence type="ECO:0000269" key="11">
    <source ref="6"/>
</evidence>
<evidence type="ECO:0000305" key="12"/>
<evidence type="ECO:0007829" key="13">
    <source>
        <dbReference type="PDB" id="1DWY"/>
    </source>
</evidence>
<evidence type="ECO:0007829" key="14">
    <source>
        <dbReference type="PDB" id="1SKH"/>
    </source>
</evidence>
<evidence type="ECO:0007829" key="15">
    <source>
        <dbReference type="PDB" id="2HH0"/>
    </source>
</evidence>
<evidence type="ECO:0007829" key="16">
    <source>
        <dbReference type="PDB" id="4YX2"/>
    </source>
</evidence>
<dbReference type="EMBL" id="X55882">
    <property type="protein sequence ID" value="CAA39368.1"/>
    <property type="molecule type" value="Genomic_DNA"/>
</dbReference>
<dbReference type="EMBL" id="D10612">
    <property type="protein sequence ID" value="BAA01467.1"/>
    <property type="molecule type" value="mRNA"/>
</dbReference>
<dbReference type="EMBL" id="D10613">
    <property type="protein sequence ID" value="BAA01468.1"/>
    <property type="molecule type" value="Genomic_DNA"/>
</dbReference>
<dbReference type="EMBL" id="D10614">
    <property type="protein sequence ID" value="BAA01469.1"/>
    <property type="molecule type" value="Genomic_DNA"/>
</dbReference>
<dbReference type="EMBL" id="S55629">
    <property type="protein sequence ID" value="AAB25514.1"/>
    <property type="molecule type" value="mRNA"/>
</dbReference>
<dbReference type="EMBL" id="AB001468">
    <property type="protein sequence ID" value="BAA19253.1"/>
    <property type="molecule type" value="mRNA"/>
</dbReference>
<dbReference type="EMBL" id="AJ298878">
    <property type="protein sequence ID" value="CAC37367.1"/>
    <property type="molecule type" value="Genomic_DNA"/>
</dbReference>
<dbReference type="EMBL" id="AF455119">
    <property type="protein sequence ID" value="AAM73856.1"/>
    <property type="molecule type" value="Genomic_DNA"/>
</dbReference>
<dbReference type="EMBL" id="AF517842">
    <property type="protein sequence ID" value="AAM66709.1"/>
    <property type="molecule type" value="mRNA"/>
</dbReference>
<dbReference type="EMBL" id="AY335912">
    <property type="protein sequence ID" value="AAP84097.2"/>
    <property type="molecule type" value="Genomic_DNA"/>
</dbReference>
<dbReference type="EMBL" id="AY367638">
    <property type="protein sequence ID" value="AAQ64645.1"/>
    <property type="molecule type" value="Genomic_DNA"/>
</dbReference>
<dbReference type="EMBL" id="AY367639">
    <property type="protein sequence ID" value="AAQ64646.1"/>
    <property type="molecule type" value="Genomic_DNA"/>
</dbReference>
<dbReference type="EMBL" id="AY367640">
    <property type="protein sequence ID" value="AAQ64647.1"/>
    <property type="molecule type" value="Genomic_DNA"/>
</dbReference>
<dbReference type="EMBL" id="AY367641">
    <property type="protein sequence ID" value="AAQ64648.1"/>
    <property type="molecule type" value="Genomic_DNA"/>
</dbReference>
<dbReference type="EMBL" id="AY367642">
    <property type="protein sequence ID" value="AAQ64649.1"/>
    <property type="molecule type" value="Genomic_DNA"/>
</dbReference>
<dbReference type="EMBL" id="AY367643">
    <property type="protein sequence ID" value="AAQ64650.1"/>
    <property type="molecule type" value="Genomic_DNA"/>
</dbReference>
<dbReference type="EMBL" id="AY720445">
    <property type="protein sequence ID" value="AAV30252.1"/>
    <property type="molecule type" value="Genomic_DNA"/>
</dbReference>
<dbReference type="EMBL" id="AY720446">
    <property type="protein sequence ID" value="AAV30253.1"/>
    <property type="molecule type" value="Genomic_DNA"/>
</dbReference>
<dbReference type="EMBL" id="AY720448">
    <property type="protein sequence ID" value="AAV30255.1"/>
    <property type="molecule type" value="Genomic_DNA"/>
</dbReference>
<dbReference type="EMBL" id="AY720449">
    <property type="protein sequence ID" value="AAV30256.1"/>
    <property type="molecule type" value="Genomic_DNA"/>
</dbReference>
<dbReference type="EMBL" id="AY720450">
    <property type="protein sequence ID" value="AAV30257.1"/>
    <property type="molecule type" value="Genomic_DNA"/>
</dbReference>
<dbReference type="EMBL" id="AY720451">
    <property type="protein sequence ID" value="AAV30258.1"/>
    <property type="molecule type" value="Genomic_DNA"/>
</dbReference>
<dbReference type="EMBL" id="AY720452">
    <property type="protein sequence ID" value="AAV30259.1"/>
    <property type="molecule type" value="Genomic_DNA"/>
</dbReference>
<dbReference type="EMBL" id="AY720453">
    <property type="protein sequence ID" value="AAV30260.1"/>
    <property type="molecule type" value="Genomic_DNA"/>
</dbReference>
<dbReference type="EMBL" id="AY720454">
    <property type="protein sequence ID" value="AAV30261.1"/>
    <property type="molecule type" value="Genomic_DNA"/>
</dbReference>
<dbReference type="EMBL" id="AY720455">
    <property type="protein sequence ID" value="AAV30262.1"/>
    <property type="molecule type" value="Genomic_DNA"/>
</dbReference>
<dbReference type="EMBL" id="AY720458">
    <property type="protein sequence ID" value="AAV30265.1"/>
    <property type="molecule type" value="Genomic_DNA"/>
</dbReference>
<dbReference type="EMBL" id="AY720459">
    <property type="protein sequence ID" value="AAV30266.1"/>
    <property type="molecule type" value="Genomic_DNA"/>
</dbReference>
<dbReference type="EMBL" id="AY720460">
    <property type="protein sequence ID" value="AAV30267.1"/>
    <property type="molecule type" value="Genomic_DNA"/>
</dbReference>
<dbReference type="EMBL" id="AY720461">
    <property type="protein sequence ID" value="AAV30268.1"/>
    <property type="molecule type" value="Genomic_DNA"/>
</dbReference>
<dbReference type="EMBL" id="AY720462">
    <property type="protein sequence ID" value="AAV30269.1"/>
    <property type="molecule type" value="Genomic_DNA"/>
</dbReference>
<dbReference type="EMBL" id="AY720463">
    <property type="protein sequence ID" value="AAV30270.1"/>
    <property type="molecule type" value="Genomic_DNA"/>
</dbReference>
<dbReference type="EMBL" id="AY720464">
    <property type="protein sequence ID" value="AAV30271.1"/>
    <property type="molecule type" value="Genomic_DNA"/>
</dbReference>
<dbReference type="EMBL" id="AY720465">
    <property type="protein sequence ID" value="AAV30272.1"/>
    <property type="molecule type" value="Genomic_DNA"/>
</dbReference>
<dbReference type="EMBL" id="AY720466">
    <property type="protein sequence ID" value="AAV30273.1"/>
    <property type="molecule type" value="Genomic_DNA"/>
</dbReference>
<dbReference type="EMBL" id="AY720467">
    <property type="protein sequence ID" value="AAV30274.1"/>
    <property type="molecule type" value="Genomic_DNA"/>
</dbReference>
<dbReference type="EMBL" id="AY720468">
    <property type="protein sequence ID" value="AAV30275.1"/>
    <property type="molecule type" value="Genomic_DNA"/>
</dbReference>
<dbReference type="EMBL" id="AY720469">
    <property type="protein sequence ID" value="AAV30276.1"/>
    <property type="molecule type" value="Genomic_DNA"/>
</dbReference>
<dbReference type="EMBL" id="AY720470">
    <property type="protein sequence ID" value="AAV30277.1"/>
    <property type="molecule type" value="Genomic_DNA"/>
</dbReference>
<dbReference type="EMBL" id="AY720471">
    <property type="protein sequence ID" value="AAV30278.1"/>
    <property type="molecule type" value="Genomic_DNA"/>
</dbReference>
<dbReference type="EMBL" id="AY720472">
    <property type="protein sequence ID" value="AAV30279.1"/>
    <property type="molecule type" value="Genomic_DNA"/>
</dbReference>
<dbReference type="EMBL" id="AY720473">
    <property type="protein sequence ID" value="AAV30280.1"/>
    <property type="molecule type" value="Genomic_DNA"/>
</dbReference>
<dbReference type="EMBL" id="AY720474">
    <property type="protein sequence ID" value="AAV30281.1"/>
    <property type="molecule type" value="Genomic_DNA"/>
</dbReference>
<dbReference type="EMBL" id="AY720475">
    <property type="protein sequence ID" value="AAV30282.1"/>
    <property type="molecule type" value="Genomic_DNA"/>
</dbReference>
<dbReference type="EMBL" id="AY720476">
    <property type="protein sequence ID" value="AAV30283.1"/>
    <property type="molecule type" value="Genomic_DNA"/>
</dbReference>
<dbReference type="EMBL" id="AY720477">
    <property type="protein sequence ID" value="AAV30284.1"/>
    <property type="molecule type" value="Genomic_DNA"/>
</dbReference>
<dbReference type="EMBL" id="AY720478">
    <property type="protein sequence ID" value="AAV30285.1"/>
    <property type="molecule type" value="Genomic_DNA"/>
</dbReference>
<dbReference type="EMBL" id="AY720479">
    <property type="protein sequence ID" value="AAV30286.1"/>
    <property type="molecule type" value="Genomic_DNA"/>
</dbReference>
<dbReference type="EMBL" id="AY720480">
    <property type="protein sequence ID" value="AAV30287.1"/>
    <property type="molecule type" value="Genomic_DNA"/>
</dbReference>
<dbReference type="EMBL" id="AY720481">
    <property type="protein sequence ID" value="AAV30288.1"/>
    <property type="molecule type" value="Genomic_DNA"/>
</dbReference>
<dbReference type="EMBL" id="AY720482">
    <property type="protein sequence ID" value="AAV30289.1"/>
    <property type="molecule type" value="Genomic_DNA"/>
</dbReference>
<dbReference type="EMBL" id="AY720483">
    <property type="protein sequence ID" value="AAV30290.1"/>
    <property type="molecule type" value="Genomic_DNA"/>
</dbReference>
<dbReference type="EMBL" id="AY720484">
    <property type="protein sequence ID" value="AAV30291.1"/>
    <property type="molecule type" value="Genomic_DNA"/>
</dbReference>
<dbReference type="EMBL" id="AY720485">
    <property type="protein sequence ID" value="AAV30292.1"/>
    <property type="molecule type" value="Genomic_DNA"/>
</dbReference>
<dbReference type="EMBL" id="AY720486">
    <property type="protein sequence ID" value="AAV30293.1"/>
    <property type="molecule type" value="Genomic_DNA"/>
</dbReference>
<dbReference type="EMBL" id="AY720488">
    <property type="protein sequence ID" value="AAV30295.1"/>
    <property type="molecule type" value="Genomic_DNA"/>
</dbReference>
<dbReference type="EMBL" id="AY720489">
    <property type="protein sequence ID" value="AAV30296.1"/>
    <property type="molecule type" value="Genomic_DNA"/>
</dbReference>
<dbReference type="EMBL" id="AY720492">
    <property type="protein sequence ID" value="AAV30299.1"/>
    <property type="molecule type" value="Genomic_DNA"/>
</dbReference>
<dbReference type="EMBL" id="AY720493">
    <property type="protein sequence ID" value="AAV30300.1"/>
    <property type="molecule type" value="Genomic_DNA"/>
</dbReference>
<dbReference type="EMBL" id="AY720494">
    <property type="protein sequence ID" value="AAV30301.1"/>
    <property type="molecule type" value="Genomic_DNA"/>
</dbReference>
<dbReference type="EMBL" id="AY720495">
    <property type="protein sequence ID" value="AAV30302.1"/>
    <property type="molecule type" value="Genomic_DNA"/>
</dbReference>
<dbReference type="EMBL" id="AY720496">
    <property type="protein sequence ID" value="AAV30303.1"/>
    <property type="molecule type" value="Genomic_DNA"/>
</dbReference>
<dbReference type="EMBL" id="AY720497">
    <property type="protein sequence ID" value="AAV30304.1"/>
    <property type="molecule type" value="Genomic_DNA"/>
</dbReference>
<dbReference type="EMBL" id="AY720498">
    <property type="protein sequence ID" value="AAV30305.1"/>
    <property type="molecule type" value="Genomic_DNA"/>
</dbReference>
<dbReference type="EMBL" id="AY720503">
    <property type="protein sequence ID" value="AAV30310.1"/>
    <property type="molecule type" value="Genomic_DNA"/>
</dbReference>
<dbReference type="EMBL" id="AY720504">
    <property type="protein sequence ID" value="AAV30311.1"/>
    <property type="molecule type" value="Genomic_DNA"/>
</dbReference>
<dbReference type="EMBL" id="AY720505">
    <property type="protein sequence ID" value="AAV30312.1"/>
    <property type="molecule type" value="Genomic_DNA"/>
</dbReference>
<dbReference type="EMBL" id="AY720506">
    <property type="protein sequence ID" value="AAV30313.1"/>
    <property type="molecule type" value="Genomic_DNA"/>
</dbReference>
<dbReference type="EMBL" id="AY720507">
    <property type="protein sequence ID" value="AAV30314.1"/>
    <property type="molecule type" value="Genomic_DNA"/>
</dbReference>
<dbReference type="EMBL" id="AY720508">
    <property type="protein sequence ID" value="AAV30315.1"/>
    <property type="molecule type" value="Genomic_DNA"/>
</dbReference>
<dbReference type="EMBL" id="AY720509">
    <property type="protein sequence ID" value="AAV30316.1"/>
    <property type="molecule type" value="Genomic_DNA"/>
</dbReference>
<dbReference type="EMBL" id="AY720510">
    <property type="protein sequence ID" value="AAV30317.1"/>
    <property type="molecule type" value="Genomic_DNA"/>
</dbReference>
<dbReference type="EMBL" id="AY720511">
    <property type="protein sequence ID" value="AAV30318.1"/>
    <property type="molecule type" value="Genomic_DNA"/>
</dbReference>
<dbReference type="EMBL" id="AY720512">
    <property type="protein sequence ID" value="AAV30319.1"/>
    <property type="molecule type" value="Genomic_DNA"/>
</dbReference>
<dbReference type="EMBL" id="AY720513">
    <property type="protein sequence ID" value="AAV30320.1"/>
    <property type="molecule type" value="Genomic_DNA"/>
</dbReference>
<dbReference type="EMBL" id="AY720514">
    <property type="protein sequence ID" value="AAV30321.1"/>
    <property type="molecule type" value="Genomic_DNA"/>
</dbReference>
<dbReference type="EMBL" id="AY720525">
    <property type="protein sequence ID" value="AAV30332.1"/>
    <property type="molecule type" value="Genomic_DNA"/>
</dbReference>
<dbReference type="EMBL" id="AY720530">
    <property type="protein sequence ID" value="AAV30337.1"/>
    <property type="molecule type" value="Genomic_DNA"/>
</dbReference>
<dbReference type="EMBL" id="AY720531">
    <property type="protein sequence ID" value="AAV30338.1"/>
    <property type="molecule type" value="Genomic_DNA"/>
</dbReference>
<dbReference type="EMBL" id="AY720532">
    <property type="protein sequence ID" value="AAV30339.1"/>
    <property type="molecule type" value="Genomic_DNA"/>
</dbReference>
<dbReference type="EMBL" id="AY720533">
    <property type="protein sequence ID" value="AAV30340.1"/>
    <property type="molecule type" value="Genomic_DNA"/>
</dbReference>
<dbReference type="EMBL" id="AY720534">
    <property type="protein sequence ID" value="AAV30341.1"/>
    <property type="molecule type" value="Genomic_DNA"/>
</dbReference>
<dbReference type="EMBL" id="AY720535">
    <property type="protein sequence ID" value="AAV30342.1"/>
    <property type="molecule type" value="Genomic_DNA"/>
</dbReference>
<dbReference type="EMBL" id="AY720540">
    <property type="protein sequence ID" value="AAV30347.1"/>
    <property type="molecule type" value="Genomic_DNA"/>
</dbReference>
<dbReference type="EMBL" id="AY720541">
    <property type="protein sequence ID" value="AAV30348.1"/>
    <property type="molecule type" value="Genomic_DNA"/>
</dbReference>
<dbReference type="EMBL" id="AY720544">
    <property type="protein sequence ID" value="AAV30351.1"/>
    <property type="molecule type" value="Genomic_DNA"/>
</dbReference>
<dbReference type="EMBL" id="AY720545">
    <property type="protein sequence ID" value="AAV30352.1"/>
    <property type="molecule type" value="Genomic_DNA"/>
</dbReference>
<dbReference type="EMBL" id="AY720546">
    <property type="protein sequence ID" value="AAV30353.1"/>
    <property type="molecule type" value="Genomic_DNA"/>
</dbReference>
<dbReference type="EMBL" id="AY720547">
    <property type="protein sequence ID" value="AAV30354.1"/>
    <property type="molecule type" value="Genomic_DNA"/>
</dbReference>
<dbReference type="EMBL" id="AY720548">
    <property type="protein sequence ID" value="AAV30355.1"/>
    <property type="molecule type" value="Genomic_DNA"/>
</dbReference>
<dbReference type="EMBL" id="AY720549">
    <property type="protein sequence ID" value="AAV30356.1"/>
    <property type="molecule type" value="Genomic_DNA"/>
</dbReference>
<dbReference type="EMBL" id="AY720550">
    <property type="protein sequence ID" value="AAV30357.1"/>
    <property type="molecule type" value="Genomic_DNA"/>
</dbReference>
<dbReference type="EMBL" id="AY720551">
    <property type="protein sequence ID" value="AAV30358.1"/>
    <property type="molecule type" value="Genomic_DNA"/>
</dbReference>
<dbReference type="EMBL" id="AY720552">
    <property type="protein sequence ID" value="AAV30359.1"/>
    <property type="molecule type" value="Genomic_DNA"/>
</dbReference>
<dbReference type="EMBL" id="AY720553">
    <property type="protein sequence ID" value="AAV30360.1"/>
    <property type="molecule type" value="Genomic_DNA"/>
</dbReference>
<dbReference type="EMBL" id="AY720554">
    <property type="protein sequence ID" value="AAV30361.1"/>
    <property type="molecule type" value="Genomic_DNA"/>
</dbReference>
<dbReference type="EMBL" id="AY720555">
    <property type="protein sequence ID" value="AAV30362.1"/>
    <property type="molecule type" value="Genomic_DNA"/>
</dbReference>
<dbReference type="EMBL" id="AY720556">
    <property type="protein sequence ID" value="AAV30363.1"/>
    <property type="molecule type" value="Genomic_DNA"/>
</dbReference>
<dbReference type="EMBL" id="AY720557">
    <property type="protein sequence ID" value="AAV30364.1"/>
    <property type="molecule type" value="Genomic_DNA"/>
</dbReference>
<dbReference type="EMBL" id="AY720558">
    <property type="protein sequence ID" value="AAV30365.1"/>
    <property type="molecule type" value="Genomic_DNA"/>
</dbReference>
<dbReference type="EMBL" id="AY720559">
    <property type="protein sequence ID" value="AAV30366.1"/>
    <property type="molecule type" value="Genomic_DNA"/>
</dbReference>
<dbReference type="EMBL" id="AY720560">
    <property type="protein sequence ID" value="AAV30367.1"/>
    <property type="molecule type" value="Genomic_DNA"/>
</dbReference>
<dbReference type="EMBL" id="AY720561">
    <property type="protein sequence ID" value="AAV30368.1"/>
    <property type="molecule type" value="Genomic_DNA"/>
</dbReference>
<dbReference type="EMBL" id="AY720562">
    <property type="protein sequence ID" value="AAV30369.1"/>
    <property type="molecule type" value="Genomic_DNA"/>
</dbReference>
<dbReference type="EMBL" id="AY720563">
    <property type="protein sequence ID" value="AAV30370.1"/>
    <property type="molecule type" value="Genomic_DNA"/>
</dbReference>
<dbReference type="EMBL" id="AY720564">
    <property type="protein sequence ID" value="AAV30371.1"/>
    <property type="molecule type" value="Genomic_DNA"/>
</dbReference>
<dbReference type="EMBL" id="AY720565">
    <property type="protein sequence ID" value="AAV30372.1"/>
    <property type="molecule type" value="Genomic_DNA"/>
</dbReference>
<dbReference type="EMBL" id="AY720566">
    <property type="protein sequence ID" value="AAV30373.1"/>
    <property type="molecule type" value="Genomic_DNA"/>
</dbReference>
<dbReference type="EMBL" id="AY720567">
    <property type="protein sequence ID" value="AAV30374.1"/>
    <property type="molecule type" value="Genomic_DNA"/>
</dbReference>
<dbReference type="EMBL" id="AY720568">
    <property type="protein sequence ID" value="AAV30375.1"/>
    <property type="molecule type" value="Genomic_DNA"/>
</dbReference>
<dbReference type="EMBL" id="AY720569">
    <property type="protein sequence ID" value="AAV30376.1"/>
    <property type="molecule type" value="Genomic_DNA"/>
</dbReference>
<dbReference type="EMBL" id="AY720570">
    <property type="protein sequence ID" value="AAV30377.1"/>
    <property type="molecule type" value="Genomic_DNA"/>
</dbReference>
<dbReference type="EMBL" id="AY720571">
    <property type="protein sequence ID" value="AAV30378.1"/>
    <property type="molecule type" value="Genomic_DNA"/>
</dbReference>
<dbReference type="EMBL" id="AY720572">
    <property type="protein sequence ID" value="AAV30379.1"/>
    <property type="molecule type" value="Genomic_DNA"/>
</dbReference>
<dbReference type="EMBL" id="AY720573">
    <property type="protein sequence ID" value="AAV30380.1"/>
    <property type="molecule type" value="Genomic_DNA"/>
</dbReference>
<dbReference type="EMBL" id="AY720574">
    <property type="protein sequence ID" value="AAV30381.1"/>
    <property type="molecule type" value="Genomic_DNA"/>
</dbReference>
<dbReference type="EMBL" id="AY720581">
    <property type="protein sequence ID" value="AAV30388.1"/>
    <property type="molecule type" value="Genomic_DNA"/>
</dbReference>
<dbReference type="EMBL" id="AY720582">
    <property type="protein sequence ID" value="AAV30389.1"/>
    <property type="molecule type" value="Genomic_DNA"/>
</dbReference>
<dbReference type="EMBL" id="AY720583">
    <property type="protein sequence ID" value="AAV30390.1"/>
    <property type="molecule type" value="Genomic_DNA"/>
</dbReference>
<dbReference type="EMBL" id="AY720584">
    <property type="protein sequence ID" value="AAV30391.1"/>
    <property type="molecule type" value="Genomic_DNA"/>
</dbReference>
<dbReference type="EMBL" id="AY720585">
    <property type="protein sequence ID" value="AAV30392.1"/>
    <property type="molecule type" value="Genomic_DNA"/>
</dbReference>
<dbReference type="EMBL" id="AY720588">
    <property type="protein sequence ID" value="AAV30395.1"/>
    <property type="molecule type" value="Genomic_DNA"/>
</dbReference>
<dbReference type="EMBL" id="AY720591">
    <property type="protein sequence ID" value="AAV30398.1"/>
    <property type="molecule type" value="Genomic_DNA"/>
</dbReference>
<dbReference type="EMBL" id="AY720594">
    <property type="protein sequence ID" value="AAV30401.1"/>
    <property type="molecule type" value="Genomic_DNA"/>
</dbReference>
<dbReference type="EMBL" id="AY720595">
    <property type="protein sequence ID" value="AAV30402.1"/>
    <property type="molecule type" value="Genomic_DNA"/>
</dbReference>
<dbReference type="EMBL" id="AY720596">
    <property type="protein sequence ID" value="AAV30403.1"/>
    <property type="molecule type" value="Genomic_DNA"/>
</dbReference>
<dbReference type="EMBL" id="AY720597">
    <property type="protein sequence ID" value="AAV30404.1"/>
    <property type="molecule type" value="Genomic_DNA"/>
</dbReference>
<dbReference type="EMBL" id="AY720600">
    <property type="protein sequence ID" value="AAV30407.1"/>
    <property type="molecule type" value="Genomic_DNA"/>
</dbReference>
<dbReference type="EMBL" id="AY720601">
    <property type="protein sequence ID" value="AAV30408.1"/>
    <property type="molecule type" value="Genomic_DNA"/>
</dbReference>
<dbReference type="EMBL" id="AY720602">
    <property type="protein sequence ID" value="AAV30409.1"/>
    <property type="molecule type" value="Genomic_DNA"/>
</dbReference>
<dbReference type="EMBL" id="AY720603">
    <property type="protein sequence ID" value="AAV30410.1"/>
    <property type="molecule type" value="Genomic_DNA"/>
</dbReference>
<dbReference type="EMBL" id="AY720604">
    <property type="protein sequence ID" value="AAV30411.1"/>
    <property type="molecule type" value="Genomic_DNA"/>
</dbReference>
<dbReference type="EMBL" id="AY720605">
    <property type="protein sequence ID" value="AAV30412.1"/>
    <property type="molecule type" value="Genomic_DNA"/>
</dbReference>
<dbReference type="EMBL" id="AY720606">
    <property type="protein sequence ID" value="AAV30413.1"/>
    <property type="molecule type" value="Genomic_DNA"/>
</dbReference>
<dbReference type="EMBL" id="AY720607">
    <property type="protein sequence ID" value="AAV30414.1"/>
    <property type="molecule type" value="Genomic_DNA"/>
</dbReference>
<dbReference type="EMBL" id="AY720608">
    <property type="protein sequence ID" value="AAV30415.1"/>
    <property type="molecule type" value="Genomic_DNA"/>
</dbReference>
<dbReference type="EMBL" id="AY720609">
    <property type="protein sequence ID" value="AAV30416.1"/>
    <property type="molecule type" value="Genomic_DNA"/>
</dbReference>
<dbReference type="EMBL" id="AY720610">
    <property type="protein sequence ID" value="AAV30417.1"/>
    <property type="molecule type" value="Genomic_DNA"/>
</dbReference>
<dbReference type="EMBL" id="AY720611">
    <property type="protein sequence ID" value="AAV30418.1"/>
    <property type="molecule type" value="Genomic_DNA"/>
</dbReference>
<dbReference type="EMBL" id="AY720612">
    <property type="protein sequence ID" value="AAV30419.1"/>
    <property type="molecule type" value="Genomic_DNA"/>
</dbReference>
<dbReference type="EMBL" id="AY720613">
    <property type="protein sequence ID" value="AAV30420.1"/>
    <property type="molecule type" value="Genomic_DNA"/>
</dbReference>
<dbReference type="EMBL" id="AY720622">
    <property type="protein sequence ID" value="AAV30429.1"/>
    <property type="molecule type" value="Genomic_DNA"/>
</dbReference>
<dbReference type="EMBL" id="AY720623">
    <property type="protein sequence ID" value="AAV30430.1"/>
    <property type="molecule type" value="Genomic_DNA"/>
</dbReference>
<dbReference type="EMBL" id="AY720624">
    <property type="protein sequence ID" value="AAV30431.1"/>
    <property type="molecule type" value="Genomic_DNA"/>
</dbReference>
<dbReference type="EMBL" id="AY720625">
    <property type="protein sequence ID" value="AAV30432.1"/>
    <property type="molecule type" value="Genomic_DNA"/>
</dbReference>
<dbReference type="EMBL" id="AY720626">
    <property type="protein sequence ID" value="AAV30433.1"/>
    <property type="molecule type" value="Genomic_DNA"/>
</dbReference>
<dbReference type="EMBL" id="AY720627">
    <property type="protein sequence ID" value="AAV30434.1"/>
    <property type="molecule type" value="Genomic_DNA"/>
</dbReference>
<dbReference type="EMBL" id="AY720628">
    <property type="protein sequence ID" value="AAV30435.1"/>
    <property type="molecule type" value="Genomic_DNA"/>
</dbReference>
<dbReference type="EMBL" id="AY720629">
    <property type="protein sequence ID" value="AAV30436.1"/>
    <property type="molecule type" value="Genomic_DNA"/>
</dbReference>
<dbReference type="EMBL" id="AY720630">
    <property type="protein sequence ID" value="AAV30437.1"/>
    <property type="molecule type" value="Genomic_DNA"/>
</dbReference>
<dbReference type="EMBL" id="AY720631">
    <property type="protein sequence ID" value="AAV30438.1"/>
    <property type="molecule type" value="Genomic_DNA"/>
</dbReference>
<dbReference type="EMBL" id="AY720632">
    <property type="protein sequence ID" value="AAV30439.1"/>
    <property type="molecule type" value="Genomic_DNA"/>
</dbReference>
<dbReference type="EMBL" id="AY720633">
    <property type="protein sequence ID" value="AAV30440.1"/>
    <property type="molecule type" value="Genomic_DNA"/>
</dbReference>
<dbReference type="EMBL" id="AY720634">
    <property type="protein sequence ID" value="AAV30441.1"/>
    <property type="molecule type" value="Genomic_DNA"/>
</dbReference>
<dbReference type="EMBL" id="AY720635">
    <property type="protein sequence ID" value="AAV30442.1"/>
    <property type="molecule type" value="Genomic_DNA"/>
</dbReference>
<dbReference type="EMBL" id="AY720636">
    <property type="protein sequence ID" value="AAV30443.1"/>
    <property type="molecule type" value="Genomic_DNA"/>
</dbReference>
<dbReference type="EMBL" id="AY720637">
    <property type="protein sequence ID" value="AAV30444.1"/>
    <property type="molecule type" value="Genomic_DNA"/>
</dbReference>
<dbReference type="EMBL" id="AY720640">
    <property type="protein sequence ID" value="AAV30447.1"/>
    <property type="molecule type" value="Genomic_DNA"/>
</dbReference>
<dbReference type="EMBL" id="AY720641">
    <property type="protein sequence ID" value="AAV30448.1"/>
    <property type="molecule type" value="Genomic_DNA"/>
</dbReference>
<dbReference type="EMBL" id="AY720642">
    <property type="protein sequence ID" value="AAV30449.1"/>
    <property type="molecule type" value="Genomic_DNA"/>
</dbReference>
<dbReference type="EMBL" id="AY720643">
    <property type="protein sequence ID" value="AAV30450.1"/>
    <property type="molecule type" value="Genomic_DNA"/>
</dbReference>
<dbReference type="EMBL" id="AY720644">
    <property type="protein sequence ID" value="AAV30451.1"/>
    <property type="molecule type" value="Genomic_DNA"/>
</dbReference>
<dbReference type="EMBL" id="AY720645">
    <property type="protein sequence ID" value="AAV30452.1"/>
    <property type="molecule type" value="Genomic_DNA"/>
</dbReference>
<dbReference type="EMBL" id="AY720648">
    <property type="protein sequence ID" value="AAV30455.1"/>
    <property type="molecule type" value="Genomic_DNA"/>
</dbReference>
<dbReference type="EMBL" id="AY720649">
    <property type="protein sequence ID" value="AAV30456.1"/>
    <property type="molecule type" value="Genomic_DNA"/>
</dbReference>
<dbReference type="EMBL" id="AY720650">
    <property type="protein sequence ID" value="AAV30457.1"/>
    <property type="molecule type" value="Genomic_DNA"/>
</dbReference>
<dbReference type="EMBL" id="AY720651">
    <property type="protein sequence ID" value="AAV30458.1"/>
    <property type="molecule type" value="Genomic_DNA"/>
</dbReference>
<dbReference type="EMBL" id="AY720652">
    <property type="protein sequence ID" value="AAV30459.1"/>
    <property type="molecule type" value="Genomic_DNA"/>
</dbReference>
<dbReference type="EMBL" id="AY720653">
    <property type="protein sequence ID" value="AAV30460.1"/>
    <property type="molecule type" value="Genomic_DNA"/>
</dbReference>
<dbReference type="EMBL" id="AY720654">
    <property type="protein sequence ID" value="AAV30461.1"/>
    <property type="molecule type" value="Genomic_DNA"/>
</dbReference>
<dbReference type="EMBL" id="AY720655">
    <property type="protein sequence ID" value="AAV30462.1"/>
    <property type="molecule type" value="Genomic_DNA"/>
</dbReference>
<dbReference type="EMBL" id="AY720656">
    <property type="protein sequence ID" value="AAV30463.1"/>
    <property type="molecule type" value="Genomic_DNA"/>
</dbReference>
<dbReference type="EMBL" id="AY720657">
    <property type="protein sequence ID" value="AAV30464.1"/>
    <property type="molecule type" value="Genomic_DNA"/>
</dbReference>
<dbReference type="EMBL" id="AY720662">
    <property type="protein sequence ID" value="AAV30469.1"/>
    <property type="molecule type" value="Genomic_DNA"/>
</dbReference>
<dbReference type="EMBL" id="AY720663">
    <property type="protein sequence ID" value="AAV30470.1"/>
    <property type="molecule type" value="Genomic_DNA"/>
</dbReference>
<dbReference type="EMBL" id="AY720664">
    <property type="protein sequence ID" value="AAV30471.1"/>
    <property type="molecule type" value="Genomic_DNA"/>
</dbReference>
<dbReference type="EMBL" id="AY720667">
    <property type="protein sequence ID" value="AAV30474.1"/>
    <property type="molecule type" value="Genomic_DNA"/>
</dbReference>
<dbReference type="EMBL" id="AY720668">
    <property type="protein sequence ID" value="AAV30475.1"/>
    <property type="molecule type" value="Genomic_DNA"/>
</dbReference>
<dbReference type="EMBL" id="AY720669">
    <property type="protein sequence ID" value="AAV30476.1"/>
    <property type="molecule type" value="Genomic_DNA"/>
</dbReference>
<dbReference type="EMBL" id="AY720670">
    <property type="protein sequence ID" value="AAV30477.1"/>
    <property type="molecule type" value="Genomic_DNA"/>
</dbReference>
<dbReference type="EMBL" id="AY720671">
    <property type="protein sequence ID" value="AAV30478.1"/>
    <property type="molecule type" value="Genomic_DNA"/>
</dbReference>
<dbReference type="EMBL" id="AY720672">
    <property type="protein sequence ID" value="AAV30479.1"/>
    <property type="molecule type" value="Genomic_DNA"/>
</dbReference>
<dbReference type="EMBL" id="AY720673">
    <property type="protein sequence ID" value="AAV30480.1"/>
    <property type="molecule type" value="Genomic_DNA"/>
</dbReference>
<dbReference type="EMBL" id="AY720674">
    <property type="protein sequence ID" value="AAV30481.1"/>
    <property type="molecule type" value="Genomic_DNA"/>
</dbReference>
<dbReference type="EMBL" id="AY720675">
    <property type="protein sequence ID" value="AAV30482.1"/>
    <property type="molecule type" value="Genomic_DNA"/>
</dbReference>
<dbReference type="EMBL" id="AY720676">
    <property type="protein sequence ID" value="AAV30483.1"/>
    <property type="molecule type" value="Genomic_DNA"/>
</dbReference>
<dbReference type="EMBL" id="AY720677">
    <property type="protein sequence ID" value="AAV30484.1"/>
    <property type="molecule type" value="Genomic_DNA"/>
</dbReference>
<dbReference type="EMBL" id="AY720678">
    <property type="protein sequence ID" value="AAV30485.1"/>
    <property type="molecule type" value="Genomic_DNA"/>
</dbReference>
<dbReference type="EMBL" id="DQ205538">
    <property type="protein sequence ID" value="ABB51165.1"/>
    <property type="molecule type" value="Genomic_DNA"/>
</dbReference>
<dbReference type="EMBL" id="AY944236">
    <property type="protein sequence ID" value="AAY21624.1"/>
    <property type="molecule type" value="Genomic_DNA"/>
</dbReference>
<dbReference type="EMBL" id="AB248079">
    <property type="protein sequence ID" value="BAE78586.1"/>
    <property type="molecule type" value="Genomic_DNA"/>
</dbReference>
<dbReference type="EMBL" id="AB247937">
    <property type="protein sequence ID" value="BAE78583.1"/>
    <property type="molecule type" value="Genomic_DNA"/>
</dbReference>
<dbReference type="EMBL" id="EF139165">
    <property type="protein sequence ID" value="ABL75501.1"/>
    <property type="molecule type" value="Genomic_DNA"/>
</dbReference>
<dbReference type="EMBL" id="BC119821">
    <property type="protein sequence ID" value="AAI19822.1"/>
    <property type="molecule type" value="mRNA"/>
</dbReference>
<dbReference type="EMBL" id="D26151">
    <property type="protein sequence ID" value="BAA05138.1"/>
    <property type="molecule type" value="Genomic_DNA"/>
</dbReference>
<dbReference type="PIR" id="A54330">
    <property type="entry name" value="A54330"/>
</dbReference>
<dbReference type="PIR" id="JU0268">
    <property type="entry name" value="JU0268"/>
</dbReference>
<dbReference type="RefSeq" id="NP_001258555.1">
    <property type="nucleotide sequence ID" value="NM_001271626.3"/>
</dbReference>
<dbReference type="RefSeq" id="NP_851358.2">
    <property type="nucleotide sequence ID" value="NM_181015.4"/>
</dbReference>
<dbReference type="PDB" id="1DWY">
    <property type="method" value="NMR"/>
    <property type="chains" value="A=132-241"/>
</dbReference>
<dbReference type="PDB" id="1DWZ">
    <property type="method" value="NMR"/>
    <property type="chains" value="A=132-241"/>
</dbReference>
<dbReference type="PDB" id="1DX0">
    <property type="method" value="NMR"/>
    <property type="chains" value="A=25-241"/>
</dbReference>
<dbReference type="PDB" id="1DX1">
    <property type="method" value="NMR"/>
    <property type="chains" value="A=25-241"/>
</dbReference>
<dbReference type="PDB" id="1SKH">
    <property type="method" value="NMR"/>
    <property type="chains" value="A=1-30"/>
</dbReference>
<dbReference type="PDB" id="2HH0">
    <property type="method" value="X-ray"/>
    <property type="resolution" value="2.85 A"/>
    <property type="chains" value="P=107-115"/>
</dbReference>
<dbReference type="PDB" id="2RSK">
    <property type="method" value="NMR"/>
    <property type="chains" value="C/D=108-119"/>
</dbReference>
<dbReference type="PDB" id="2RU7">
    <property type="method" value="NMR"/>
    <property type="chains" value="C/D=108-119"/>
</dbReference>
<dbReference type="PDB" id="4YX2">
    <property type="method" value="X-ray"/>
    <property type="resolution" value="2.19 A"/>
    <property type="chains" value="A=103-242"/>
</dbReference>
<dbReference type="PDBsum" id="1DWY"/>
<dbReference type="PDBsum" id="1DWZ"/>
<dbReference type="PDBsum" id="1DX0"/>
<dbReference type="PDBsum" id="1DX1"/>
<dbReference type="PDBsum" id="1SKH"/>
<dbReference type="PDBsum" id="2HH0"/>
<dbReference type="PDBsum" id="2RSK"/>
<dbReference type="PDBsum" id="2RU7"/>
<dbReference type="PDBsum" id="4YX2"/>
<dbReference type="BMRB" id="P10279"/>
<dbReference type="SMR" id="P10279"/>
<dbReference type="BioGRID" id="158758">
    <property type="interactions" value="3"/>
</dbReference>
<dbReference type="FunCoup" id="P10279">
    <property type="interactions" value="737"/>
</dbReference>
<dbReference type="IntAct" id="P10279">
    <property type="interactions" value="1"/>
</dbReference>
<dbReference type="MINT" id="P10279"/>
<dbReference type="STRING" id="9913.ENSBTAP00000069134"/>
<dbReference type="GlyCosmos" id="P10279">
    <property type="glycosylation" value="2 sites, No reported glycans"/>
</dbReference>
<dbReference type="GlyGen" id="P10279">
    <property type="glycosylation" value="2 sites"/>
</dbReference>
<dbReference type="PaxDb" id="9913-ENSBTAP00000043233"/>
<dbReference type="ABCD" id="P10279">
    <property type="antibodies" value="10 sequenced antibodies"/>
</dbReference>
<dbReference type="Ensembl" id="ENSBTAT00000080493.2">
    <property type="protein sequence ID" value="ENSBTAP00000069134.2"/>
    <property type="gene ID" value="ENSBTAG00000063812.1"/>
</dbReference>
<dbReference type="Ensembl" id="ENSBTAT00000090572.1">
    <property type="protein sequence ID" value="ENSBTAP00000086207.1"/>
    <property type="gene ID" value="ENSBTAG00000063812.1"/>
</dbReference>
<dbReference type="Ensembl" id="ENSBTAT00000101610.1">
    <property type="protein sequence ID" value="ENSBTAP00000091075.1"/>
    <property type="gene ID" value="ENSBTAG00000063812.1"/>
</dbReference>
<dbReference type="Ensembl" id="ENSBTAT00000113268.1">
    <property type="protein sequence ID" value="ENSBTAP00000093386.1"/>
    <property type="gene ID" value="ENSBTAG00000063812.1"/>
</dbReference>
<dbReference type="GeneID" id="281427"/>
<dbReference type="CTD" id="5621"/>
<dbReference type="eggNOG" id="ENOG502S2A8">
    <property type="taxonomic scope" value="Eukaryota"/>
</dbReference>
<dbReference type="GeneTree" id="ENSGT00510000049083"/>
<dbReference type="HOGENOM" id="CLU_094631_0_0_1"/>
<dbReference type="InParanoid" id="P10279"/>
<dbReference type="OrthoDB" id="9048788at2759"/>
<dbReference type="TreeFam" id="TF105188"/>
<dbReference type="EvolutionaryTrace" id="P10279"/>
<dbReference type="Proteomes" id="UP000009136">
    <property type="component" value="Chromosome 13"/>
</dbReference>
<dbReference type="GO" id="GO:0005794">
    <property type="term" value="C:Golgi apparatus"/>
    <property type="evidence" value="ECO:0007669"/>
    <property type="project" value="UniProtKB-SubCell"/>
</dbReference>
<dbReference type="GO" id="GO:0005886">
    <property type="term" value="C:plasma membrane"/>
    <property type="evidence" value="ECO:0007669"/>
    <property type="project" value="UniProtKB-SubCell"/>
</dbReference>
<dbReference type="GO" id="GO:0098552">
    <property type="term" value="C:side of membrane"/>
    <property type="evidence" value="ECO:0007669"/>
    <property type="project" value="UniProtKB-KW"/>
</dbReference>
<dbReference type="GO" id="GO:0005507">
    <property type="term" value="F:copper ion binding"/>
    <property type="evidence" value="ECO:0000250"/>
    <property type="project" value="UniProtKB"/>
</dbReference>
<dbReference type="GO" id="GO:0002151">
    <property type="term" value="F:G-quadruplex RNA binding"/>
    <property type="evidence" value="ECO:0000269"/>
    <property type="project" value="DisProt"/>
</dbReference>
<dbReference type="GO" id="GO:0042802">
    <property type="term" value="F:identical protein binding"/>
    <property type="evidence" value="ECO:0000353"/>
    <property type="project" value="IntAct"/>
</dbReference>
<dbReference type="GO" id="GO:0051260">
    <property type="term" value="P:protein homooligomerization"/>
    <property type="evidence" value="ECO:0007669"/>
    <property type="project" value="InterPro"/>
</dbReference>
<dbReference type="DisProt" id="DP00783"/>
<dbReference type="FunFam" id="1.10.790.10:FF:000001">
    <property type="entry name" value="Major prion protein"/>
    <property type="match status" value="1"/>
</dbReference>
<dbReference type="Gene3D" id="1.10.790.10">
    <property type="entry name" value="Prion/Doppel protein, beta-ribbon domain"/>
    <property type="match status" value="1"/>
</dbReference>
<dbReference type="IDEAL" id="IID50068"/>
<dbReference type="InterPro" id="IPR000817">
    <property type="entry name" value="Prion"/>
</dbReference>
<dbReference type="InterPro" id="IPR036924">
    <property type="entry name" value="Prion/Doppel_b-ribbon_dom_sf"/>
</dbReference>
<dbReference type="InterPro" id="IPR022416">
    <property type="entry name" value="Prion/Doppel_prot_b-ribbon_dom"/>
</dbReference>
<dbReference type="InterPro" id="IPR020949">
    <property type="entry name" value="Prion_copper_b_octapeptide"/>
</dbReference>
<dbReference type="InterPro" id="IPR025860">
    <property type="entry name" value="Prion_N"/>
</dbReference>
<dbReference type="PANTHER" id="PTHR15506">
    <property type="entry name" value="DOPPEL PRION"/>
    <property type="match status" value="1"/>
</dbReference>
<dbReference type="PANTHER" id="PTHR15506:SF2">
    <property type="entry name" value="MAJOR PRION PROTEIN"/>
    <property type="match status" value="1"/>
</dbReference>
<dbReference type="Pfam" id="PF00377">
    <property type="entry name" value="Prion"/>
    <property type="match status" value="1"/>
</dbReference>
<dbReference type="Pfam" id="PF11587">
    <property type="entry name" value="Prion_bPrPp"/>
    <property type="match status" value="1"/>
</dbReference>
<dbReference type="Pfam" id="PF03991">
    <property type="entry name" value="Prion_octapep"/>
    <property type="match status" value="1"/>
</dbReference>
<dbReference type="PRINTS" id="PR00341">
    <property type="entry name" value="PRION"/>
</dbReference>
<dbReference type="SMART" id="SM00157">
    <property type="entry name" value="PRP"/>
    <property type="match status" value="1"/>
</dbReference>
<dbReference type="SUPFAM" id="SSF54098">
    <property type="entry name" value="Prion-like"/>
    <property type="match status" value="1"/>
</dbReference>
<dbReference type="PROSITE" id="PS00291">
    <property type="entry name" value="PRION_1"/>
    <property type="match status" value="1"/>
</dbReference>
<dbReference type="PROSITE" id="PS00706">
    <property type="entry name" value="PRION_2"/>
    <property type="match status" value="1"/>
</dbReference>
<gene>
    <name type="primary">PRNP</name>
    <name type="synonym">PRP</name>
</gene>
<reference key="1">
    <citation type="journal article" date="1991" name="J. Gen. Virol.">
        <title>Different forms of the bovine PrP gene have five or six copies of a short, G-C-rich element within the protein-coding exon.</title>
        <authorList>
            <person name="Goldmann W."/>
            <person name="Hunter N."/>
            <person name="Martin T."/>
            <person name="Dawson M."/>
            <person name="Hope J."/>
        </authorList>
    </citation>
    <scope>NUCLEOTIDE SEQUENCE [GENOMIC DNA]</scope>
    <source>
        <strain>Holstein-Friesian</strain>
    </source>
</reference>
<reference key="2">
    <citation type="journal article" date="1992" name="Virus Genes">
        <title>Comparative sequence analysis and expression of bovine PrP gene in mouse L-929 cells.</title>
        <authorList>
            <person name="Yoshimoto J."/>
            <person name="Iinuma T."/>
            <person name="Ishiguro N."/>
            <person name="Horiuchi M."/>
            <person name="Imamura M."/>
            <person name="Shinagawa M."/>
        </authorList>
    </citation>
    <scope>NUCLEOTIDE SEQUENCE [GENOMIC DNA / MRNA]</scope>
    <scope>VARIANTS 92-TRP--GLY-99 DEL AND ASN-154</scope>
    <source>
        <strain>Holstein-Friesian</strain>
        <tissue>Brain</tissue>
    </source>
</reference>
<reference key="3">
    <citation type="journal article" date="1993" name="J. Infect. Dis.">
        <title>Immunologic and molecular biologic studies of prion proteins in bovine spongiform encephalopathy.</title>
        <authorList>
            <person name="Prusiner S.B."/>
            <person name="Fuzi M."/>
            <person name="Scott M."/>
            <person name="Serban D."/>
            <person name="Serban H."/>
            <person name="Taraboulos A."/>
            <person name="Gabriel J.M."/>
            <person name="Wells G.A."/>
            <person name="Wilesmith J.W."/>
            <person name="Bradley R."/>
        </authorList>
    </citation>
    <scope>NUCLEOTIDE SEQUENCE [MRNA]</scope>
</reference>
<reference key="4">
    <citation type="submission" date="1997-02" db="EMBL/GenBank/DDBJ databases">
        <title>Genomic organization of bovine PrP gene and complete nucleotide sequence of bovine PrP cDNA.</title>
        <authorList>
            <person name="Horiuchi M."/>
            <person name="Ishiguro N."/>
            <person name="Nagasawa H."/>
            <person name="Toyoda Y."/>
            <person name="Shinagawa M."/>
        </authorList>
    </citation>
    <scope>NUCLEOTIDE SEQUENCE [MRNA]</scope>
    <source>
        <strain>Holstein-Friesian</strain>
        <tissue>Brain</tissue>
    </source>
</reference>
<reference key="5">
    <citation type="journal article" date="2001" name="Anim. Genet.">
        <title>Complete genomic sequence of the bovine prion gene (PRNP) and polymorphism in its promoter region.</title>
        <authorList>
            <person name="Hills D."/>
            <person name="Comincini S."/>
            <person name="Schlaepfer J."/>
            <person name="Dolf G."/>
            <person name="Ferretti L."/>
            <person name="Williams J.L."/>
        </authorList>
    </citation>
    <scope>NUCLEOTIDE SEQUENCE [GENOMIC DNA]</scope>
    <source>
        <strain>Jersey</strain>
    </source>
</reference>
<reference key="6">
    <citation type="submission" date="2001-12" db="EMBL/GenBank/DDBJ databases">
        <title>Bovine PrP gene for prion protein.</title>
        <authorList>
            <person name="Naharro G."/>
            <person name="Yugueros J."/>
            <person name="Temprano A."/>
        </authorList>
    </citation>
    <scope>NUCLEOTIDE SEQUENCE [GENOMIC DNA]</scope>
    <scope>VARIANT GLY-TRP-GLY-GLN-PRO-HIS-GLY-GLY-98 INS</scope>
</reference>
<reference key="7">
    <citation type="submission" date="2002-06" db="EMBL/GenBank/DDBJ databases">
        <title>Nucleotide sequence of PrP cDNA in Korean cattle.</title>
        <authorList>
            <person name="Yoo H.S."/>
            <person name="Kang S.G."/>
            <person name="Choi I.S."/>
            <person name="Kang S.K."/>
            <person name="Hwang W.S."/>
        </authorList>
    </citation>
    <scope>NUCLEOTIDE SEQUENCE [MRNA]</scope>
    <source>
        <strain>Korean</strain>
    </source>
</reference>
<reference key="8">
    <citation type="journal article" date="2003" name="Mamm. Genome">
        <title>Prion gene sequence variation within diverse groups of U.S. sheep, beef cattle, and deer.</title>
        <authorList>
            <person name="Heaton M.P."/>
            <person name="Leymaster K.A."/>
            <person name="Freking B.A."/>
            <person name="Hawk D.A."/>
            <person name="Smith T.P."/>
            <person name="Keele J.W."/>
            <person name="Snelling W.M."/>
            <person name="Fox J.M."/>
            <person name="Chitko-McKown C.G."/>
            <person name="Laegreid W.W."/>
        </authorList>
    </citation>
    <scope>NUCLEOTIDE SEQUENCE [GENOMIC DNA]</scope>
</reference>
<reference key="9">
    <citation type="journal article" date="2008" name="BMC Vet. Res.">
        <title>Prevalence of the prion protein gene E211K variant in U.S. cattle.</title>
        <authorList>
            <person name="Heaton M.P."/>
            <person name="Keele J.W."/>
            <person name="Harhay G.P."/>
            <person name="Richt J.A."/>
            <person name="Koohmaraie M."/>
            <person name="Wheeler T.L."/>
            <person name="Shackelford S.D."/>
            <person name="Casas E."/>
            <person name="King D.A."/>
            <person name="Sonstegard T.S."/>
            <person name="Van Tassell C.P."/>
            <person name="Neibergs H.L."/>
            <person name="Chase C.C. Jr."/>
            <person name="Kalbfleisch T.S."/>
            <person name="Smith T.P.L."/>
            <person name="Clawson M.L."/>
            <person name="Laegreid W.W."/>
        </authorList>
    </citation>
    <scope>SEQUENCE REVISION TO 211</scope>
    <scope>VARIANT LYS-211</scope>
</reference>
<reference key="10">
    <citation type="submission" date="2003-08" db="EMBL/GenBank/DDBJ databases">
        <title>Cloning and sequence analysis of bovine prion protein gene.</title>
        <authorList>
            <person name="Wu R."/>
            <person name="Xie Q.G."/>
            <person name="Liu X.T."/>
            <person name="Chen H.T."/>
            <person name="Cheng J."/>
        </authorList>
    </citation>
    <scope>NUCLEOTIDE SEQUENCE [GENOMIC DNA]</scope>
    <scope>VARIANTS ARG-60; ARG-94; ASN-154 AND ARG-234</scope>
    <source>
        <strain>Holstein-Friesian</strain>
        <strain>Qinchuan</strain>
        <tissue>Blood</tissue>
    </source>
</reference>
<reference key="11">
    <citation type="journal article" date="2004" name="Proc. Natl. Acad. Sci. U.S.A.">
        <title>Prion protein gene (PRNP) variants and evidence for strong purifying selection in functionally important regions of bovine exon 3.</title>
        <authorList>
            <person name="Seabury C.M."/>
            <person name="Honeycutt R.L."/>
            <person name="Rooney A.P."/>
            <person name="Halbert N.D."/>
            <person name="Derr J.N."/>
        </authorList>
    </citation>
    <scope>NUCLEOTIDE SEQUENCE [GENOMIC DNA]</scope>
    <scope>VARIANTS 84-TRP--GLY-99 DEL; 92-TRP--GLY-99 DEL AND GLY-TRP-GLY-GLN-PRO-HIS-GLY-GLY-98 INS</scope>
</reference>
<reference key="12">
    <citation type="submission" date="2005-09" db="EMBL/GenBank/DDBJ databases">
        <title>Genomic characterization of the bovine PRN loci (PRNP, PRND and PRNT).</title>
        <authorList>
            <person name="Uboldi C."/>
            <person name="Bertoni A."/>
            <person name="Del Vecchio I."/>
            <person name="Comincini S."/>
            <person name="Hills D."/>
            <person name="Schlaepfer J."/>
            <person name="Dolf G."/>
            <person name="Williams J.L."/>
            <person name="Ferretti L."/>
        </authorList>
    </citation>
    <scope>NUCLEOTIDE SEQUENCE [GENOMIC DNA]</scope>
</reference>
<reference key="13">
    <citation type="journal article" date="2006" name="Genomics">
        <title>Comparative genomic organization of the human and bovine PRNP locus.</title>
        <authorList>
            <person name="Choi S.-H."/>
            <person name="Kim I.-C."/>
            <person name="Kim D.-S."/>
            <person name="Kim D.-W."/>
            <person name="Chae S.-H."/>
            <person name="Choi H.-H."/>
            <person name="Choi I."/>
            <person name="Yeo J.-S."/>
            <person name="Song M.-N."/>
            <person name="Park H.-S."/>
        </authorList>
    </citation>
    <scope>NUCLEOTIDE SEQUENCE [GENOMIC DNA]</scope>
</reference>
<reference key="14">
    <citation type="submission" date="2006-01" db="EMBL/GenBank/DDBJ databases">
        <title>Frequencies of bovine PrP gene polymorphisms in Japanese-black and Holstein bulls in japan.</title>
        <authorList>
            <person name="Abe T."/>
            <person name="Hasebe H."/>
            <person name="Kobayashi E."/>
        </authorList>
    </citation>
    <scope>NUCLEOTIDE SEQUENCE [GENOMIC DNA]</scope>
    <source>
        <strain>Holstein</strain>
        <strain>Japanese black</strain>
        <tissue>Semen</tissue>
    </source>
</reference>
<reference key="15">
    <citation type="submission" date="2006-11" db="EMBL/GenBank/DDBJ databases">
        <title>Detection of prion protein in various animal species by a new set of monoclonal antibodies.</title>
        <authorList>
            <person name="Barbieri I."/>
            <person name="Brocchi E."/>
            <person name="Borre A."/>
            <person name="Moretti M."/>
            <person name="Gelmetti D."/>
            <person name="Capucci L."/>
        </authorList>
    </citation>
    <scope>NUCLEOTIDE SEQUENCE [GENOMIC DNA]</scope>
    <source>
        <tissue>Brain</tissue>
    </source>
</reference>
<reference key="16">
    <citation type="submission" date="2006-08" db="EMBL/GenBank/DDBJ databases">
        <authorList>
            <consortium name="NIH - Mammalian Gene Collection (MGC) project"/>
        </authorList>
    </citation>
    <scope>NUCLEOTIDE SEQUENCE [LARGE SCALE MRNA]</scope>
    <source>
        <strain>Hereford</strain>
        <tissue>Hypothalamus</tissue>
    </source>
</reference>
<reference key="17">
    <citation type="submission" date="1994-01" db="EMBL/GenBank/DDBJ databases">
        <title>Characterization of bovine PrP promoter region.</title>
        <authorList>
            <person name="Tanaka M."/>
            <person name="Inoue S."/>
            <person name="Ikeda T."/>
            <person name="Horiuchi M."/>
            <person name="Ishiguro N."/>
            <person name="Shinagawa M."/>
        </authorList>
    </citation>
    <scope>NUCLEOTIDE SEQUENCE [GENOMIC DNA] OF 1-15</scope>
</reference>
<reference key="18">
    <citation type="journal article" date="1988" name="Nature">
        <title>Fibrils from brains of cows with new cattle disease contain scrapie-associated protein.</title>
        <authorList>
            <person name="Hope J."/>
            <person name="Reekie L.J.D."/>
            <person name="Hunter N."/>
            <person name="Multhaup G."/>
            <person name="Beyreuther K."/>
            <person name="White H."/>
            <person name="Scott A.C."/>
            <person name="Stack M.J."/>
            <person name="Dawson M."/>
            <person name="Wells G.A."/>
        </authorList>
    </citation>
    <scope>PROTEIN SEQUENCE OF 25-36</scope>
</reference>
<reference key="19">
    <citation type="journal article" date="2004" name="Biochemistry">
        <title>NMR solution structure and membrane interaction of the N-terminal sequence (1-30) of the bovine prion protein.</title>
        <authorList>
            <person name="Biverstahl H."/>
            <person name="Andersson A."/>
            <person name="Graslund A."/>
            <person name="Maler L."/>
        </authorList>
    </citation>
    <scope>STRUCTURE BY NMR OF 1-30</scope>
</reference>
<reference key="20">
    <citation type="journal article" date="2000" name="Proc. Natl. Acad. Sci. U.S.A.">
        <title>NMR structure of the bovine prion protein.</title>
        <authorList>
            <person name="Lopez Garcia F."/>
            <person name="Zahn R."/>
            <person name="Riek R."/>
            <person name="Wuethrich K."/>
        </authorList>
    </citation>
    <scope>STRUCTURE BY NMR OF 132-241</scope>
</reference>
<reference key="21">
    <citation type="journal article" date="2006" name="J. Mol. Biol.">
        <title>Directed evolution of an anti-prion protein scFv fragment to an affinity of 1 pM and its structural interpretation.</title>
        <authorList>
            <person name="Luginbuhl B."/>
            <person name="Kanyo Z."/>
            <person name="Jones R.M."/>
            <person name="Fletterick R.J."/>
            <person name="Prusiner S.B."/>
            <person name="Cohen F.E."/>
            <person name="Williamson R.A."/>
            <person name="Burton D.R."/>
            <person name="Pluckthun A."/>
        </authorList>
    </citation>
    <scope>X-RAY CRYSTALLOGRAPHY (2.85 ANGSTROMS) OF 107-115 IN COMPLEX WITH ANTIBODY FRAGMENT</scope>
</reference>